<name>PG053_SWPVK</name>
<reference key="1">
    <citation type="journal article" date="1993" name="Virology">
        <title>DNA sequence analysis of conserved and unique regions of swinepox virus: identification of genetic elements supporting phenotypic observations including a novel G protein-coupled receptor homologue.</title>
        <authorList>
            <person name="Massung R.F."/>
            <person name="Jayarama V."/>
            <person name="Moyer R.W."/>
        </authorList>
    </citation>
    <scope>NUCLEOTIDE SEQUENCE [GENOMIC DNA]</scope>
</reference>
<comment type="function">
    <text evidence="1">Component of the entry fusion complex (EFC), which consists of 11 proteins. During cell infection, this complex mediates entry of the virion core into the host cytoplasm by a two-step mechanism consisting of lipid mixing of the viral and cellular membranes and subsequent pore formation.</text>
</comment>
<comment type="subunit">
    <text evidence="1">Component of the entry fusion complex (EFC) composed of OPG053, OPG076, OPG086, OPG094, OPG095, OPG099, OPG107, OPG143, OPG104, OPG147 and OPG155. Except for OPG095 and OPG052, each of the EFC proteins is required for assembly or stability of the complex.</text>
</comment>
<comment type="subcellular location">
    <subcellularLocation>
        <location evidence="1">Virion membrane</location>
        <topology evidence="1">Single-pass membrane protein</topology>
    </subcellularLocation>
    <text evidence="1">Component of the mature virion (MV) membrane.</text>
</comment>
<comment type="PTM">
    <text evidence="1">Disulfid bonds are oxidized in the cytoplasm by OPG088 protein.</text>
</comment>
<comment type="PTM">
    <text evidence="1">Unglycosylated because produced in viral factories instead of the classic ER -Golgi route.</text>
</comment>
<comment type="similarity">
    <text evidence="3">Belongs to the orthopoxvirus OPG053 family.</text>
</comment>
<dbReference type="EMBL" id="L22013">
    <property type="protein sequence ID" value="AAC37852.1"/>
    <property type="molecule type" value="Genomic_DNA"/>
</dbReference>
<dbReference type="SMR" id="P32207"/>
<dbReference type="KEGG" id="vg:932407"/>
<dbReference type="GO" id="GO:0016020">
    <property type="term" value="C:membrane"/>
    <property type="evidence" value="ECO:0007669"/>
    <property type="project" value="UniProtKB-KW"/>
</dbReference>
<dbReference type="GO" id="GO:0019031">
    <property type="term" value="C:viral envelope"/>
    <property type="evidence" value="ECO:0007669"/>
    <property type="project" value="UniProtKB-KW"/>
</dbReference>
<dbReference type="GO" id="GO:0055036">
    <property type="term" value="C:virion membrane"/>
    <property type="evidence" value="ECO:0007669"/>
    <property type="project" value="UniProtKB-SubCell"/>
</dbReference>
<dbReference type="InterPro" id="IPR003472">
    <property type="entry name" value="Virion_mem_poxvirus_L1"/>
</dbReference>
<dbReference type="Pfam" id="PF02442">
    <property type="entry name" value="L1R_F9L"/>
    <property type="match status" value="1"/>
</dbReference>
<organismHost>
    <name type="scientific">Sus scrofa</name>
    <name type="common">Pig</name>
    <dbReference type="NCBI Taxonomy" id="9823"/>
</organismHost>
<evidence type="ECO:0000250" key="1">
    <source>
        <dbReference type="UniProtKB" id="P24361"/>
    </source>
</evidence>
<evidence type="ECO:0000255" key="2"/>
<evidence type="ECO:0000305" key="3"/>
<sequence>MENPVRINTLYNVFVERYIENLSIYSIPINSTCGIHIGEIKGTFKRCFLKILNMCINDKELSFNILIKTLKDVTSTLSQKEKEELSKEIGIDILNNDPKYVPEIIRNCSSSADVTNIIDIQTLDVGKCIAPYDKQILLQIVNSGTAEANCVMNSIMNSMNRRYIDNANIYNYLNLTNRPWFIFSIIIIAIIFVIGICSIKRRIGIKYKYGTFLYV</sequence>
<accession>P32207</accession>
<keyword id="KW-1015">Disulfide bond</keyword>
<keyword id="KW-0426">Late protein</keyword>
<keyword id="KW-0472">Membrane</keyword>
<keyword id="KW-0812">Transmembrane</keyword>
<keyword id="KW-1133">Transmembrane helix</keyword>
<keyword id="KW-0261">Viral envelope protein</keyword>
<keyword id="KW-0946">Virion</keyword>
<proteinExistence type="inferred from homology"/>
<protein>
    <recommendedName>
        <fullName>EFC-associated protein OPG053</fullName>
    </recommendedName>
    <alternativeName>
        <fullName>F9 protein homolog</fullName>
    </alternativeName>
    <alternativeName>
        <fullName>Protein C19</fullName>
    </alternativeName>
</protein>
<organism>
    <name type="scientific">Swinepox virus (strain Kasza)</name>
    <name type="common">SWPV</name>
    <dbReference type="NCBI Taxonomy" id="10277"/>
    <lineage>
        <taxon>Viruses</taxon>
        <taxon>Varidnaviria</taxon>
        <taxon>Bamfordvirae</taxon>
        <taxon>Nucleocytoviricota</taxon>
        <taxon>Pokkesviricetes</taxon>
        <taxon>Chitovirales</taxon>
        <taxon>Poxviridae</taxon>
        <taxon>Chordopoxvirinae</taxon>
        <taxon>Suipoxvirus</taxon>
        <taxon>Swinepox virus</taxon>
    </lineage>
</organism>
<gene>
    <name type="primary">OPG053</name>
    <name type="ORF">C19L</name>
</gene>
<feature type="chain" id="PRO_0000099497" description="EFC-associated protein OPG053">
    <location>
        <begin position="1"/>
        <end position="215"/>
    </location>
</feature>
<feature type="transmembrane region" description="Helical" evidence="2">
    <location>
        <begin position="179"/>
        <end position="199"/>
    </location>
</feature>
<feature type="disulfide bond" description="by OPG088" evidence="1">
    <location>
        <begin position="33"/>
        <end position="55"/>
    </location>
</feature>
<feature type="disulfide bond" description="by OPG088" evidence="1">
    <location>
        <begin position="47"/>
        <end position="128"/>
    </location>
</feature>
<feature type="disulfide bond" description="by OPG088" evidence="1">
    <location>
        <begin position="108"/>
        <end position="150"/>
    </location>
</feature>